<keyword id="KW-1003">Cell membrane</keyword>
<keyword id="KW-0472">Membrane</keyword>
<keyword id="KW-0653">Protein transport</keyword>
<keyword id="KW-1185">Reference proteome</keyword>
<keyword id="KW-0811">Translocation</keyword>
<keyword id="KW-0812">Transmembrane</keyword>
<keyword id="KW-1133">Transmembrane helix</keyword>
<keyword id="KW-0813">Transport</keyword>
<name>SECG_STAEQ</name>
<sequence>MHTLIIVLLIIDCIALVTVVLLQEGKSNGLSGAISGGAEQLFGKQKQRGVDLFLHRLTIILAILFFVLMFCISYLGM</sequence>
<organism>
    <name type="scientific">Staphylococcus epidermidis (strain ATCC 35984 / DSM 28319 / BCRC 17069 / CCUG 31568 / BM 3577 / RP62A)</name>
    <dbReference type="NCBI Taxonomy" id="176279"/>
    <lineage>
        <taxon>Bacteria</taxon>
        <taxon>Bacillati</taxon>
        <taxon>Bacillota</taxon>
        <taxon>Bacilli</taxon>
        <taxon>Bacillales</taxon>
        <taxon>Staphylococcaceae</taxon>
        <taxon>Staphylococcus</taxon>
    </lineage>
</organism>
<gene>
    <name type="primary">secG</name>
    <name type="ordered locus">SERP0448</name>
</gene>
<feature type="chain" id="PRO_0000157246" description="Probable protein-export membrane protein SecG">
    <location>
        <begin position="1"/>
        <end position="77"/>
    </location>
</feature>
<feature type="transmembrane region" description="Helical" evidence="2">
    <location>
        <begin position="2"/>
        <end position="22"/>
    </location>
</feature>
<feature type="transmembrane region" description="Helical" evidence="2">
    <location>
        <begin position="57"/>
        <end position="77"/>
    </location>
</feature>
<accession>Q5HQU8</accession>
<protein>
    <recommendedName>
        <fullName>Probable protein-export membrane protein SecG</fullName>
    </recommendedName>
</protein>
<comment type="function">
    <text evidence="1">Involved in protein export. Participates in an early event of protein translocation (By similarity).</text>
</comment>
<comment type="subcellular location">
    <subcellularLocation>
        <location evidence="1">Cell membrane</location>
        <topology evidence="1">Multi-pass membrane protein</topology>
    </subcellularLocation>
</comment>
<comment type="similarity">
    <text evidence="3">Belongs to the SecG family.</text>
</comment>
<dbReference type="EMBL" id="CP000029">
    <property type="protein sequence ID" value="AAW53888.1"/>
    <property type="molecule type" value="Genomic_DNA"/>
</dbReference>
<dbReference type="RefSeq" id="WP_001829669.1">
    <property type="nucleotide sequence ID" value="NC_002976.3"/>
</dbReference>
<dbReference type="SMR" id="Q5HQU8"/>
<dbReference type="STRING" id="176279.SERP0448"/>
<dbReference type="GeneID" id="50019289"/>
<dbReference type="KEGG" id="ser:SERP0448"/>
<dbReference type="eggNOG" id="COG1314">
    <property type="taxonomic scope" value="Bacteria"/>
</dbReference>
<dbReference type="HOGENOM" id="CLU_094156_6_1_9"/>
<dbReference type="Proteomes" id="UP000000531">
    <property type="component" value="Chromosome"/>
</dbReference>
<dbReference type="GO" id="GO:0005886">
    <property type="term" value="C:plasma membrane"/>
    <property type="evidence" value="ECO:0007669"/>
    <property type="project" value="UniProtKB-SubCell"/>
</dbReference>
<dbReference type="GO" id="GO:0015450">
    <property type="term" value="F:protein-transporting ATPase activity"/>
    <property type="evidence" value="ECO:0007669"/>
    <property type="project" value="InterPro"/>
</dbReference>
<dbReference type="GO" id="GO:0065002">
    <property type="term" value="P:intracellular protein transmembrane transport"/>
    <property type="evidence" value="ECO:0007669"/>
    <property type="project" value="TreeGrafter"/>
</dbReference>
<dbReference type="GO" id="GO:0009306">
    <property type="term" value="P:protein secretion"/>
    <property type="evidence" value="ECO:0007669"/>
    <property type="project" value="InterPro"/>
</dbReference>
<dbReference type="GO" id="GO:0043952">
    <property type="term" value="P:protein transport by the Sec complex"/>
    <property type="evidence" value="ECO:0007669"/>
    <property type="project" value="TreeGrafter"/>
</dbReference>
<dbReference type="InterPro" id="IPR004692">
    <property type="entry name" value="SecG"/>
</dbReference>
<dbReference type="NCBIfam" id="TIGR00810">
    <property type="entry name" value="secG"/>
    <property type="match status" value="1"/>
</dbReference>
<dbReference type="PANTHER" id="PTHR34182">
    <property type="entry name" value="PROTEIN-EXPORT MEMBRANE PROTEIN SECG"/>
    <property type="match status" value="1"/>
</dbReference>
<dbReference type="PANTHER" id="PTHR34182:SF1">
    <property type="entry name" value="PROTEIN-EXPORT MEMBRANE PROTEIN SECG"/>
    <property type="match status" value="1"/>
</dbReference>
<dbReference type="Pfam" id="PF03840">
    <property type="entry name" value="SecG"/>
    <property type="match status" value="1"/>
</dbReference>
<dbReference type="PRINTS" id="PR01651">
    <property type="entry name" value="SECGEXPORT"/>
</dbReference>
<proteinExistence type="inferred from homology"/>
<reference key="1">
    <citation type="journal article" date="2005" name="J. Bacteriol.">
        <title>Insights on evolution of virulence and resistance from the complete genome analysis of an early methicillin-resistant Staphylococcus aureus strain and a biofilm-producing methicillin-resistant Staphylococcus epidermidis strain.</title>
        <authorList>
            <person name="Gill S.R."/>
            <person name="Fouts D.E."/>
            <person name="Archer G.L."/>
            <person name="Mongodin E.F."/>
            <person name="DeBoy R.T."/>
            <person name="Ravel J."/>
            <person name="Paulsen I.T."/>
            <person name="Kolonay J.F."/>
            <person name="Brinkac L.M."/>
            <person name="Beanan M.J."/>
            <person name="Dodson R.J."/>
            <person name="Daugherty S.C."/>
            <person name="Madupu R."/>
            <person name="Angiuoli S.V."/>
            <person name="Durkin A.S."/>
            <person name="Haft D.H."/>
            <person name="Vamathevan J.J."/>
            <person name="Khouri H."/>
            <person name="Utterback T.R."/>
            <person name="Lee C."/>
            <person name="Dimitrov G."/>
            <person name="Jiang L."/>
            <person name="Qin H."/>
            <person name="Weidman J."/>
            <person name="Tran K."/>
            <person name="Kang K.H."/>
            <person name="Hance I.R."/>
            <person name="Nelson K.E."/>
            <person name="Fraser C.M."/>
        </authorList>
    </citation>
    <scope>NUCLEOTIDE SEQUENCE [LARGE SCALE GENOMIC DNA]</scope>
    <source>
        <strain>ATCC 35984 / DSM 28319 / BCRC 17069 / CCUG 31568 / BM 3577 / RP62A</strain>
    </source>
</reference>
<evidence type="ECO:0000250" key="1"/>
<evidence type="ECO:0000255" key="2"/>
<evidence type="ECO:0000305" key="3"/>